<organism>
    <name type="scientific">Dictyostelium discoideum</name>
    <name type="common">Social amoeba</name>
    <dbReference type="NCBI Taxonomy" id="44689"/>
    <lineage>
        <taxon>Eukaryota</taxon>
        <taxon>Amoebozoa</taxon>
        <taxon>Evosea</taxon>
        <taxon>Eumycetozoa</taxon>
        <taxon>Dictyostelia</taxon>
        <taxon>Dictyosteliales</taxon>
        <taxon>Dictyosteliaceae</taxon>
        <taxon>Dictyostelium</taxon>
    </lineage>
</organism>
<evidence type="ECO:0000255" key="1">
    <source>
        <dbReference type="PROSITE-ProRule" id="PRU00269"/>
    </source>
</evidence>
<evidence type="ECO:0000255" key="2">
    <source>
        <dbReference type="PROSITE-ProRule" id="PRU00878"/>
    </source>
</evidence>
<evidence type="ECO:0000256" key="3">
    <source>
        <dbReference type="SAM" id="MobiDB-lite"/>
    </source>
</evidence>
<evidence type="ECO:0000305" key="4"/>
<proteinExistence type="inferred from homology"/>
<name>PI4K_DICDI</name>
<dbReference type="EC" id="2.7.1.67"/>
<dbReference type="EMBL" id="AAFI02000112">
    <property type="protein sequence ID" value="EAL63191.2"/>
    <property type="molecule type" value="Genomic_DNA"/>
</dbReference>
<dbReference type="EMBL" id="U23479">
    <property type="protein sequence ID" value="AAA85725.1"/>
    <property type="molecule type" value="Genomic_DNA"/>
</dbReference>
<dbReference type="PIR" id="T18275">
    <property type="entry name" value="T18275"/>
</dbReference>
<dbReference type="RefSeq" id="XP_636702.2">
    <property type="nucleotide sequence ID" value="XM_631610.2"/>
</dbReference>
<dbReference type="SMR" id="P54677"/>
<dbReference type="FunCoup" id="P54677">
    <property type="interactions" value="644"/>
</dbReference>
<dbReference type="STRING" id="44689.P54677"/>
<dbReference type="GlyGen" id="P54677">
    <property type="glycosylation" value="1 site"/>
</dbReference>
<dbReference type="PaxDb" id="44689-DDB0191346"/>
<dbReference type="EnsemblProtists" id="EAL63191">
    <property type="protein sequence ID" value="EAL63191"/>
    <property type="gene ID" value="DDB_G0288485"/>
</dbReference>
<dbReference type="GeneID" id="8626659"/>
<dbReference type="KEGG" id="ddi:DDB_G0288485"/>
<dbReference type="dictyBase" id="DDB_G0288485">
    <property type="gene designation" value="pikD"/>
</dbReference>
<dbReference type="VEuPathDB" id="AmoebaDB:DDB_G0288485"/>
<dbReference type="eggNOG" id="KOG0903">
    <property type="taxonomic scope" value="Eukaryota"/>
</dbReference>
<dbReference type="HOGENOM" id="CLU_273161_0_0_1"/>
<dbReference type="InParanoid" id="P54677"/>
<dbReference type="OMA" id="CEMSVIT"/>
<dbReference type="PRO" id="PR:P54677"/>
<dbReference type="Proteomes" id="UP000002195">
    <property type="component" value="Chromosome 5"/>
</dbReference>
<dbReference type="GO" id="GO:0005737">
    <property type="term" value="C:cytoplasm"/>
    <property type="evidence" value="ECO:0000318"/>
    <property type="project" value="GO_Central"/>
</dbReference>
<dbReference type="GO" id="GO:0016020">
    <property type="term" value="C:membrane"/>
    <property type="evidence" value="ECO:0000318"/>
    <property type="project" value="GO_Central"/>
</dbReference>
<dbReference type="GO" id="GO:0045121">
    <property type="term" value="C:membrane raft"/>
    <property type="evidence" value="ECO:0000314"/>
    <property type="project" value="dictyBase"/>
</dbReference>
<dbReference type="GO" id="GO:0004430">
    <property type="term" value="F:1-phosphatidylinositol 4-kinase activity"/>
    <property type="evidence" value="ECO:0000318"/>
    <property type="project" value="GO_Central"/>
</dbReference>
<dbReference type="GO" id="GO:0005524">
    <property type="term" value="F:ATP binding"/>
    <property type="evidence" value="ECO:0007669"/>
    <property type="project" value="UniProtKB-KW"/>
</dbReference>
<dbReference type="GO" id="GO:0031152">
    <property type="term" value="P:aggregation involved in sorocarp development"/>
    <property type="evidence" value="ECO:0000316"/>
    <property type="project" value="dictyBase"/>
</dbReference>
<dbReference type="GO" id="GO:0043327">
    <property type="term" value="P:chemotaxis to cAMP"/>
    <property type="evidence" value="ECO:0000316"/>
    <property type="project" value="dictyBase"/>
</dbReference>
<dbReference type="GO" id="GO:0046854">
    <property type="term" value="P:phosphatidylinositol phosphate biosynthetic process"/>
    <property type="evidence" value="ECO:0000318"/>
    <property type="project" value="GO_Central"/>
</dbReference>
<dbReference type="GO" id="GO:0048015">
    <property type="term" value="P:phosphatidylinositol-mediated signaling"/>
    <property type="evidence" value="ECO:0000318"/>
    <property type="project" value="GO_Central"/>
</dbReference>
<dbReference type="GO" id="GO:0140459">
    <property type="term" value="P:response to Gram-positive bacterium"/>
    <property type="evidence" value="ECO:0000314"/>
    <property type="project" value="dictyBase"/>
</dbReference>
<dbReference type="CDD" id="cd05168">
    <property type="entry name" value="PI4Kc_III_beta"/>
    <property type="match status" value="1"/>
</dbReference>
<dbReference type="FunFam" id="3.30.1010.10:FF:000091">
    <property type="entry name" value="Phosphatidylinositol 4-kinase"/>
    <property type="match status" value="1"/>
</dbReference>
<dbReference type="FunFam" id="1.10.1070.11:FF:000016">
    <property type="entry name" value="PIK1p Phosphatidylinositol 4-kinase"/>
    <property type="match status" value="1"/>
</dbReference>
<dbReference type="Gene3D" id="1.10.1070.11">
    <property type="entry name" value="Phosphatidylinositol 3-/4-kinase, catalytic domain"/>
    <property type="match status" value="1"/>
</dbReference>
<dbReference type="Gene3D" id="3.30.1010.10">
    <property type="entry name" value="Phosphatidylinositol 3-kinase Catalytic Subunit, Chain A, domain 4"/>
    <property type="match status" value="1"/>
</dbReference>
<dbReference type="Gene3D" id="1.25.40.70">
    <property type="entry name" value="Phosphatidylinositol 3-kinase, accessory domain (PIK)"/>
    <property type="match status" value="1"/>
</dbReference>
<dbReference type="InterPro" id="IPR016024">
    <property type="entry name" value="ARM-type_fold"/>
</dbReference>
<dbReference type="InterPro" id="IPR011009">
    <property type="entry name" value="Kinase-like_dom_sf"/>
</dbReference>
<dbReference type="InterPro" id="IPR000403">
    <property type="entry name" value="PI3/4_kinase_cat_dom"/>
</dbReference>
<dbReference type="InterPro" id="IPR036940">
    <property type="entry name" value="PI3/4_kinase_cat_sf"/>
</dbReference>
<dbReference type="InterPro" id="IPR018936">
    <property type="entry name" value="PI3/4_kinase_CS"/>
</dbReference>
<dbReference type="InterPro" id="IPR001263">
    <property type="entry name" value="PI3K_accessory_dom"/>
</dbReference>
<dbReference type="InterPro" id="IPR042236">
    <property type="entry name" value="PI3K_accessory_sf"/>
</dbReference>
<dbReference type="InterPro" id="IPR049160">
    <property type="entry name" value="PI4KB-PIK1_PIK"/>
</dbReference>
<dbReference type="InterPro" id="IPR015433">
    <property type="entry name" value="PI_Kinase"/>
</dbReference>
<dbReference type="PANTHER" id="PTHR10048:SF22">
    <property type="entry name" value="PHOSPHATIDYLINOSITOL 4-KINASE BETA"/>
    <property type="match status" value="1"/>
</dbReference>
<dbReference type="PANTHER" id="PTHR10048">
    <property type="entry name" value="PHOSPHATIDYLINOSITOL KINASE"/>
    <property type="match status" value="1"/>
</dbReference>
<dbReference type="Pfam" id="PF00454">
    <property type="entry name" value="PI3_PI4_kinase"/>
    <property type="match status" value="1"/>
</dbReference>
<dbReference type="Pfam" id="PF21245">
    <property type="entry name" value="PI4KB-PIK1_PIK"/>
    <property type="match status" value="1"/>
</dbReference>
<dbReference type="SMART" id="SM00146">
    <property type="entry name" value="PI3Kc"/>
    <property type="match status" value="1"/>
</dbReference>
<dbReference type="SUPFAM" id="SSF48371">
    <property type="entry name" value="ARM repeat"/>
    <property type="match status" value="1"/>
</dbReference>
<dbReference type="SUPFAM" id="SSF56112">
    <property type="entry name" value="Protein kinase-like (PK-like)"/>
    <property type="match status" value="1"/>
</dbReference>
<dbReference type="PROSITE" id="PS00915">
    <property type="entry name" value="PI3_4_KINASE_1"/>
    <property type="match status" value="1"/>
</dbReference>
<dbReference type="PROSITE" id="PS00916">
    <property type="entry name" value="PI3_4_KINASE_2"/>
    <property type="match status" value="1"/>
</dbReference>
<dbReference type="PROSITE" id="PS50290">
    <property type="entry name" value="PI3_4_KINASE_3"/>
    <property type="match status" value="1"/>
</dbReference>
<dbReference type="PROSITE" id="PS51545">
    <property type="entry name" value="PIK_HELICAL"/>
    <property type="match status" value="1"/>
</dbReference>
<reference key="1">
    <citation type="journal article" date="2005" name="Nature">
        <title>The genome of the social amoeba Dictyostelium discoideum.</title>
        <authorList>
            <person name="Eichinger L."/>
            <person name="Pachebat J.A."/>
            <person name="Gloeckner G."/>
            <person name="Rajandream M.A."/>
            <person name="Sucgang R."/>
            <person name="Berriman M."/>
            <person name="Song J."/>
            <person name="Olsen R."/>
            <person name="Szafranski K."/>
            <person name="Xu Q."/>
            <person name="Tunggal B."/>
            <person name="Kummerfeld S."/>
            <person name="Madera M."/>
            <person name="Konfortov B.A."/>
            <person name="Rivero F."/>
            <person name="Bankier A.T."/>
            <person name="Lehmann R."/>
            <person name="Hamlin N."/>
            <person name="Davies R."/>
            <person name="Gaudet P."/>
            <person name="Fey P."/>
            <person name="Pilcher K."/>
            <person name="Chen G."/>
            <person name="Saunders D."/>
            <person name="Sodergren E.J."/>
            <person name="Davis P."/>
            <person name="Kerhornou A."/>
            <person name="Nie X."/>
            <person name="Hall N."/>
            <person name="Anjard C."/>
            <person name="Hemphill L."/>
            <person name="Bason N."/>
            <person name="Farbrother P."/>
            <person name="Desany B."/>
            <person name="Just E."/>
            <person name="Morio T."/>
            <person name="Rost R."/>
            <person name="Churcher C.M."/>
            <person name="Cooper J."/>
            <person name="Haydock S."/>
            <person name="van Driessche N."/>
            <person name="Cronin A."/>
            <person name="Goodhead I."/>
            <person name="Muzny D.M."/>
            <person name="Mourier T."/>
            <person name="Pain A."/>
            <person name="Lu M."/>
            <person name="Harper D."/>
            <person name="Lindsay R."/>
            <person name="Hauser H."/>
            <person name="James K.D."/>
            <person name="Quiles M."/>
            <person name="Madan Babu M."/>
            <person name="Saito T."/>
            <person name="Buchrieser C."/>
            <person name="Wardroper A."/>
            <person name="Felder M."/>
            <person name="Thangavelu M."/>
            <person name="Johnson D."/>
            <person name="Knights A."/>
            <person name="Loulseged H."/>
            <person name="Mungall K.L."/>
            <person name="Oliver K."/>
            <person name="Price C."/>
            <person name="Quail M.A."/>
            <person name="Urushihara H."/>
            <person name="Hernandez J."/>
            <person name="Rabbinowitsch E."/>
            <person name="Steffen D."/>
            <person name="Sanders M."/>
            <person name="Ma J."/>
            <person name="Kohara Y."/>
            <person name="Sharp S."/>
            <person name="Simmonds M.N."/>
            <person name="Spiegler S."/>
            <person name="Tivey A."/>
            <person name="Sugano S."/>
            <person name="White B."/>
            <person name="Walker D."/>
            <person name="Woodward J.R."/>
            <person name="Winckler T."/>
            <person name="Tanaka Y."/>
            <person name="Shaulsky G."/>
            <person name="Schleicher M."/>
            <person name="Weinstock G.M."/>
            <person name="Rosenthal A."/>
            <person name="Cox E.C."/>
            <person name="Chisholm R.L."/>
            <person name="Gibbs R.A."/>
            <person name="Loomis W.F."/>
            <person name="Platzer M."/>
            <person name="Kay R.R."/>
            <person name="Williams J.G."/>
            <person name="Dear P.H."/>
            <person name="Noegel A.A."/>
            <person name="Barrell B.G."/>
            <person name="Kuspa A."/>
        </authorList>
    </citation>
    <scope>NUCLEOTIDE SEQUENCE [LARGE SCALE GENOMIC DNA]</scope>
    <source>
        <strain>AX4</strain>
    </source>
</reference>
<reference key="2">
    <citation type="journal article" date="1995" name="Mol. Cell. Biol.">
        <title>A phosphatidylinositol (PI) kinase gene family in Dictyostelium discoideum: biological roles of putative mammalian p110 and yeast Vps34p PI 3-kinase homologs during growth and development.</title>
        <authorList>
            <person name="Zhou K."/>
            <person name="Takegawa K."/>
            <person name="Emr S.D."/>
            <person name="Firtel R.A."/>
        </authorList>
    </citation>
    <scope>NUCLEOTIDE SEQUENCE [GENOMIC DNA] OF 88-1180</scope>
    <source>
        <strain>AX3</strain>
    </source>
</reference>
<gene>
    <name type="primary">pikD</name>
    <name type="synonym">pik4</name>
    <name type="ORF">DDB_G0288485</name>
</gene>
<protein>
    <recommendedName>
        <fullName>Phosphatidylinositol 4-kinase</fullName>
        <shortName>PI4-kinase</shortName>
        <shortName>PtdIns-4-kinase</shortName>
        <ecNumber>2.7.1.67</ecNumber>
    </recommendedName>
    <alternativeName>
        <fullName>PI4K-alpha</fullName>
    </alternativeName>
</protein>
<sequence length="1180" mass="132681">MNKISDTIIITSTSNEDEVDNNNNNNNLKEIDRSPRVNNNNNNILTNVNNNKNNTITSSGGSDSSSSSSNNNNNKIKKSKKHKEKEHMDSIVKLYSGKFDSWMVICHLFKYRDNPGIVDFLCNKMYNLEDKDIDFYITQLCILLINQPHDQKASFSSLARFILDRCASSFRFAIKAYWIFQAFEEDGEKNLFSIEGSVYLHSPSTSPKDVPMYSNDQIVPIDLDKIYNQSQYDDDDFDLSDDDGGFEIIKKNDHHYENDHHIENDPKKDINSNNNNNNNINNNNSNNDDNNNNEILPNENSDNSINDENNQYGNSNNNNNISGENDNIKIDINSQNKSDSNIETLNSTLCEETKTSPIKDDMENNNNNNNNNNNNNNNNNNNNNINNNNINNNNINNNNNINYGHINGSLSTLDGIGQPYISQPNDPIENITQILKRNRIIYKKVEEKKELATRLREFCEMSVITCSRPLITRPRTSSLPSPLISYNSGKIGGNYHKILSPSSVDSTSLISEDDKIIEKEEEDNVVEDDDDDEVNSEDFIPTATTTATTTTTTIPNHLSKTTSGVGINSNSSTPININSAGAGAGGGGEINHIGYDDISYLDKCKTPPAESKLSDHDFEFELSKSHRCDYLNDILSFIQKLAHISKILLPIPIDLRQAKLKHEISLLNINLPLGLYVPLWQSSNHHCVVRIPPEEVKILNSRERVPFLLVLEVIESEHEALSSNIFEVVSSYLQYTTGNSALKKDDIKRKYYSEKFKKSFLNSSINSTISNSSDSCTTETTTTSPVATSPTLPINIPHSKLINDGSNSISKSLPVTPTQSTVLNNLISTSTAISPPSQQQQLPSPSNTTTTTTTTTTNTNNTTTTTTTTTTTLSTSPTNEKILNENKQNSSPFGESWQEKIERYKKISPFGDYPNWRLYSVIVKTGDDCRQEQMAVQLISKFDEIWKETRLPLYLRPYSILVTSSGGGIIETIPDTMSLHNLKKSTPGFTTLLNYFKSTYGDPSGLRFRTAQSNFIESMAAYSIVTYILQIKDRHNGNILIDKEGHIVHIDFGFILSNSPGNISFESAPFKLTQELVDVMGGIQSGQFQYFKVLCVRGLIEARKQVDKIISLIEIMMSGPKMSCFVGGKEVIEQLKARFFLDVNERECSTLVENLISYSIDHFKTRYYDKYQSWLNGIYQ</sequence>
<accession>P54677</accession>
<accession>Q54IV1</accession>
<keyword id="KW-0067">ATP-binding</keyword>
<keyword id="KW-0418">Kinase</keyword>
<keyword id="KW-0547">Nucleotide-binding</keyword>
<keyword id="KW-1185">Reference proteome</keyword>
<keyword id="KW-0808">Transferase</keyword>
<feature type="chain" id="PRO_0000088826" description="Phosphatidylinositol 4-kinase">
    <location>
        <begin position="1"/>
        <end position="1180"/>
    </location>
</feature>
<feature type="domain" description="PIK helical" evidence="2">
    <location>
        <begin position="1"/>
        <end position="206"/>
    </location>
</feature>
<feature type="domain" description="PI3K/PI4K catalytic" evidence="1">
    <location>
        <begin position="895"/>
        <end position="1164"/>
    </location>
</feature>
<feature type="region of interest" description="Disordered" evidence="3">
    <location>
        <begin position="15"/>
        <end position="84"/>
    </location>
</feature>
<feature type="region of interest" description="Disordered" evidence="3">
    <location>
        <begin position="257"/>
        <end position="327"/>
    </location>
</feature>
<feature type="region of interest" description="Disordered" evidence="3">
    <location>
        <begin position="355"/>
        <end position="391"/>
    </location>
</feature>
<feature type="region of interest" description="Disordered" evidence="3">
    <location>
        <begin position="768"/>
        <end position="799"/>
    </location>
</feature>
<feature type="region of interest" description="Disordered" evidence="3">
    <location>
        <begin position="832"/>
        <end position="894"/>
    </location>
</feature>
<feature type="region of interest" description="G-loop" evidence="1">
    <location>
        <begin position="901"/>
        <end position="907"/>
    </location>
</feature>
<feature type="region of interest" description="Catalytic loop" evidence="1">
    <location>
        <begin position="1030"/>
        <end position="1038"/>
    </location>
</feature>
<feature type="region of interest" description="Activation loop" evidence="1">
    <location>
        <begin position="1049"/>
        <end position="1073"/>
    </location>
</feature>
<feature type="compositionally biased region" description="Low complexity" evidence="3">
    <location>
        <begin position="38"/>
        <end position="74"/>
    </location>
</feature>
<feature type="compositionally biased region" description="Basic residues" evidence="3">
    <location>
        <begin position="75"/>
        <end position="84"/>
    </location>
</feature>
<feature type="compositionally biased region" description="Basic and acidic residues" evidence="3">
    <location>
        <begin position="257"/>
        <end position="270"/>
    </location>
</feature>
<feature type="compositionally biased region" description="Low complexity" evidence="3">
    <location>
        <begin position="271"/>
        <end position="325"/>
    </location>
</feature>
<feature type="compositionally biased region" description="Low complexity" evidence="3">
    <location>
        <begin position="364"/>
        <end position="391"/>
    </location>
</feature>
<feature type="compositionally biased region" description="Low complexity" evidence="3">
    <location>
        <begin position="768"/>
        <end position="793"/>
    </location>
</feature>
<feature type="compositionally biased region" description="Low complexity" evidence="3">
    <location>
        <begin position="835"/>
        <end position="879"/>
    </location>
</feature>
<feature type="sequence conflict" description="In Ref. 2; AAA85725." evidence="4" ref="2">
    <original>T</original>
    <variation>N</variation>
    <location>
        <position position="138"/>
    </location>
</feature>
<feature type="sequence conflict" description="In Ref. 2; AAA85725." evidence="4" ref="2">
    <original>H</original>
    <variation>L</variation>
    <location>
        <position position="149"/>
    </location>
</feature>
<feature type="sequence conflict" description="In Ref. 2; AAA85725." evidence="4" ref="2">
    <original>ND</original>
    <variation>KC</variation>
    <location>
        <begin position="252"/>
        <end position="253"/>
    </location>
</feature>
<feature type="sequence conflict" description="In Ref. 2; AAA85725." evidence="4" ref="2">
    <original>D</original>
    <variation>N</variation>
    <location>
        <position position="326"/>
    </location>
</feature>
<comment type="function">
    <text>Acts on phosphatidylinositol (PtdIns) in the first committed step in the production of the second messenger inositol-1,4,5,-trisphosphate.</text>
</comment>
<comment type="catalytic activity">
    <reaction>
        <text>a 1,2-diacyl-sn-glycero-3-phospho-(1D-myo-inositol) + ATP = a 1,2-diacyl-sn-glycero-3-phospho-(1D-myo-inositol 4-phosphate) + ADP + H(+)</text>
        <dbReference type="Rhea" id="RHEA:19877"/>
        <dbReference type="ChEBI" id="CHEBI:15378"/>
        <dbReference type="ChEBI" id="CHEBI:30616"/>
        <dbReference type="ChEBI" id="CHEBI:57880"/>
        <dbReference type="ChEBI" id="CHEBI:58178"/>
        <dbReference type="ChEBI" id="CHEBI:456216"/>
        <dbReference type="EC" id="2.7.1.67"/>
    </reaction>
</comment>
<comment type="similarity">
    <text evidence="4">Belongs to the PI3/PI4-kinase family. Type III PI4K subfamily.</text>
</comment>